<keyword id="KW-0067">ATP-binding</keyword>
<keyword id="KW-0175">Coiled coil</keyword>
<keyword id="KW-0418">Kinase</keyword>
<keyword id="KW-0547">Nucleotide-binding</keyword>
<keyword id="KW-0597">Phosphoprotein</keyword>
<keyword id="KW-1185">Reference proteome</keyword>
<keyword id="KW-0807">Transducer</keyword>
<keyword id="KW-0808">Transferase</keyword>
<keyword id="KW-0902">Two-component regulatory system</keyword>
<name>DHKF_DICDI</name>
<reference key="1">
    <citation type="book" date="2001" name="Histidine kinases in signal transduction">
        <title>The histidine kinases of Dictyostelium.</title>
        <editorList>
            <person name="Inouye M."/>
            <person name="Dutta R."/>
        </editorList>
        <authorList>
            <person name="Anjard C."/>
            <person name="Loomis W.F."/>
        </authorList>
    </citation>
    <scope>NUCLEOTIDE SEQUENCE [GENOMIC DNA]</scope>
    <source>
        <strain>AX4</strain>
    </source>
</reference>
<reference key="2">
    <citation type="journal article" date="2002" name="Nature">
        <title>Sequence and analysis of chromosome 2 of Dictyostelium discoideum.</title>
        <authorList>
            <person name="Gloeckner G."/>
            <person name="Eichinger L."/>
            <person name="Szafranski K."/>
            <person name="Pachebat J.A."/>
            <person name="Bankier A.T."/>
            <person name="Dear P.H."/>
            <person name="Lehmann R."/>
            <person name="Baumgart C."/>
            <person name="Parra G."/>
            <person name="Abril J.F."/>
            <person name="Guigo R."/>
            <person name="Kumpf K."/>
            <person name="Tunggal B."/>
            <person name="Cox E.C."/>
            <person name="Quail M.A."/>
            <person name="Platzer M."/>
            <person name="Rosenthal A."/>
            <person name="Noegel A.A."/>
        </authorList>
    </citation>
    <scope>NUCLEOTIDE SEQUENCE [LARGE SCALE GENOMIC DNA]</scope>
    <source>
        <strain>AX4</strain>
    </source>
</reference>
<reference key="3">
    <citation type="journal article" date="2005" name="Nature">
        <title>The genome of the social amoeba Dictyostelium discoideum.</title>
        <authorList>
            <person name="Eichinger L."/>
            <person name="Pachebat J.A."/>
            <person name="Gloeckner G."/>
            <person name="Rajandream M.A."/>
            <person name="Sucgang R."/>
            <person name="Berriman M."/>
            <person name="Song J."/>
            <person name="Olsen R."/>
            <person name="Szafranski K."/>
            <person name="Xu Q."/>
            <person name="Tunggal B."/>
            <person name="Kummerfeld S."/>
            <person name="Madera M."/>
            <person name="Konfortov B.A."/>
            <person name="Rivero F."/>
            <person name="Bankier A.T."/>
            <person name="Lehmann R."/>
            <person name="Hamlin N."/>
            <person name="Davies R."/>
            <person name="Gaudet P."/>
            <person name="Fey P."/>
            <person name="Pilcher K."/>
            <person name="Chen G."/>
            <person name="Saunders D."/>
            <person name="Sodergren E.J."/>
            <person name="Davis P."/>
            <person name="Kerhornou A."/>
            <person name="Nie X."/>
            <person name="Hall N."/>
            <person name="Anjard C."/>
            <person name="Hemphill L."/>
            <person name="Bason N."/>
            <person name="Farbrother P."/>
            <person name="Desany B."/>
            <person name="Just E."/>
            <person name="Morio T."/>
            <person name="Rost R."/>
            <person name="Churcher C.M."/>
            <person name="Cooper J."/>
            <person name="Haydock S."/>
            <person name="van Driessche N."/>
            <person name="Cronin A."/>
            <person name="Goodhead I."/>
            <person name="Muzny D.M."/>
            <person name="Mourier T."/>
            <person name="Pain A."/>
            <person name="Lu M."/>
            <person name="Harper D."/>
            <person name="Lindsay R."/>
            <person name="Hauser H."/>
            <person name="James K.D."/>
            <person name="Quiles M."/>
            <person name="Madan Babu M."/>
            <person name="Saito T."/>
            <person name="Buchrieser C."/>
            <person name="Wardroper A."/>
            <person name="Felder M."/>
            <person name="Thangavelu M."/>
            <person name="Johnson D."/>
            <person name="Knights A."/>
            <person name="Loulseged H."/>
            <person name="Mungall K.L."/>
            <person name="Oliver K."/>
            <person name="Price C."/>
            <person name="Quail M.A."/>
            <person name="Urushihara H."/>
            <person name="Hernandez J."/>
            <person name="Rabbinowitsch E."/>
            <person name="Steffen D."/>
            <person name="Sanders M."/>
            <person name="Ma J."/>
            <person name="Kohara Y."/>
            <person name="Sharp S."/>
            <person name="Simmonds M.N."/>
            <person name="Spiegler S."/>
            <person name="Tivey A."/>
            <person name="Sugano S."/>
            <person name="White B."/>
            <person name="Walker D."/>
            <person name="Woodward J.R."/>
            <person name="Winckler T."/>
            <person name="Tanaka Y."/>
            <person name="Shaulsky G."/>
            <person name="Schleicher M."/>
            <person name="Weinstock G.M."/>
            <person name="Rosenthal A."/>
            <person name="Cox E.C."/>
            <person name="Chisholm R.L."/>
            <person name="Gibbs R.A."/>
            <person name="Loomis W.F."/>
            <person name="Platzer M."/>
            <person name="Kay R.R."/>
            <person name="Williams J.G."/>
            <person name="Dear P.H."/>
            <person name="Noegel A.A."/>
            <person name="Barrell B.G."/>
            <person name="Kuspa A."/>
        </authorList>
    </citation>
    <scope>NUCLEOTIDE SEQUENCE [LARGE SCALE GENOMIC DNA]</scope>
    <source>
        <strain>AX4</strain>
    </source>
</reference>
<evidence type="ECO:0000250" key="1"/>
<evidence type="ECO:0000255" key="2"/>
<evidence type="ECO:0000255" key="3">
    <source>
        <dbReference type="PROSITE-ProRule" id="PRU00107"/>
    </source>
</evidence>
<evidence type="ECO:0000255" key="4">
    <source>
        <dbReference type="PROSITE-ProRule" id="PRU00141"/>
    </source>
</evidence>
<evidence type="ECO:0000255" key="5">
    <source>
        <dbReference type="PROSITE-ProRule" id="PRU00169"/>
    </source>
</evidence>
<evidence type="ECO:0000256" key="6">
    <source>
        <dbReference type="SAM" id="MobiDB-lite"/>
    </source>
</evidence>
<evidence type="ECO:0000305" key="7"/>
<dbReference type="EC" id="2.7.13.3"/>
<dbReference type="EMBL" id="AF362368">
    <property type="protein sequence ID" value="AAK54087.2"/>
    <property type="molecule type" value="Genomic_DNA"/>
</dbReference>
<dbReference type="EMBL" id="AAFI02000014">
    <property type="protein sequence ID" value="EAL69371.1"/>
    <property type="molecule type" value="Genomic_DNA"/>
</dbReference>
<dbReference type="RefSeq" id="XP_643349.1">
    <property type="nucleotide sequence ID" value="XM_638257.1"/>
</dbReference>
<dbReference type="SMR" id="Q551X9"/>
<dbReference type="STRING" id="44689.Q551X9"/>
<dbReference type="PaxDb" id="44689-DDB0185098"/>
<dbReference type="EnsemblProtists" id="EAL69371">
    <property type="protein sequence ID" value="EAL69371"/>
    <property type="gene ID" value="DDB_G0276143"/>
</dbReference>
<dbReference type="GeneID" id="8620399"/>
<dbReference type="KEGG" id="ddi:DDB_G0276143"/>
<dbReference type="dictyBase" id="DDB_G0276143">
    <property type="gene designation" value="dhkF"/>
</dbReference>
<dbReference type="VEuPathDB" id="AmoebaDB:DDB_G0276143"/>
<dbReference type="eggNOG" id="KOG0519">
    <property type="taxonomic scope" value="Eukaryota"/>
</dbReference>
<dbReference type="HOGENOM" id="CLU_282062_0_0_1"/>
<dbReference type="InParanoid" id="Q551X9"/>
<dbReference type="OMA" id="KSYMEIP"/>
<dbReference type="PhylomeDB" id="Q551X9"/>
<dbReference type="PRO" id="PR:Q551X9"/>
<dbReference type="Proteomes" id="UP000002195">
    <property type="component" value="Chromosome 2"/>
</dbReference>
<dbReference type="GO" id="GO:0005524">
    <property type="term" value="F:ATP binding"/>
    <property type="evidence" value="ECO:0007669"/>
    <property type="project" value="UniProtKB-KW"/>
</dbReference>
<dbReference type="GO" id="GO:0000155">
    <property type="term" value="F:phosphorelay sensor kinase activity"/>
    <property type="evidence" value="ECO:0007669"/>
    <property type="project" value="InterPro"/>
</dbReference>
<dbReference type="CDD" id="cd16922">
    <property type="entry name" value="HATPase_EvgS-ArcB-TorS-like"/>
    <property type="match status" value="1"/>
</dbReference>
<dbReference type="CDD" id="cd00082">
    <property type="entry name" value="HisKA"/>
    <property type="match status" value="1"/>
</dbReference>
<dbReference type="CDD" id="cd17546">
    <property type="entry name" value="REC_hyHK_CKI1_RcsC-like"/>
    <property type="match status" value="1"/>
</dbReference>
<dbReference type="FunFam" id="3.30.565.10:FF:000010">
    <property type="entry name" value="Sensor histidine kinase RcsC"/>
    <property type="match status" value="1"/>
</dbReference>
<dbReference type="Gene3D" id="1.10.287.130">
    <property type="match status" value="1"/>
</dbReference>
<dbReference type="Gene3D" id="3.40.50.2300">
    <property type="match status" value="1"/>
</dbReference>
<dbReference type="Gene3D" id="3.30.565.10">
    <property type="entry name" value="Histidine kinase-like ATPase, C-terminal domain"/>
    <property type="match status" value="1"/>
</dbReference>
<dbReference type="Gene3D" id="3.30.450.20">
    <property type="entry name" value="PAS domain"/>
    <property type="match status" value="1"/>
</dbReference>
<dbReference type="InterPro" id="IPR011006">
    <property type="entry name" value="CheY-like_superfamily"/>
</dbReference>
<dbReference type="InterPro" id="IPR036890">
    <property type="entry name" value="HATPase_C_sf"/>
</dbReference>
<dbReference type="InterPro" id="IPR005467">
    <property type="entry name" value="His_kinase_dom"/>
</dbReference>
<dbReference type="InterPro" id="IPR003661">
    <property type="entry name" value="HisK_dim/P_dom"/>
</dbReference>
<dbReference type="InterPro" id="IPR036097">
    <property type="entry name" value="HisK_dim/P_sf"/>
</dbReference>
<dbReference type="InterPro" id="IPR001610">
    <property type="entry name" value="PAC"/>
</dbReference>
<dbReference type="InterPro" id="IPR000014">
    <property type="entry name" value="PAS"/>
</dbReference>
<dbReference type="InterPro" id="IPR000700">
    <property type="entry name" value="PAS-assoc_C"/>
</dbReference>
<dbReference type="InterPro" id="IPR035965">
    <property type="entry name" value="PAS-like_dom_sf"/>
</dbReference>
<dbReference type="InterPro" id="IPR004358">
    <property type="entry name" value="Sig_transdc_His_kin-like_C"/>
</dbReference>
<dbReference type="InterPro" id="IPR001789">
    <property type="entry name" value="Sig_transdc_resp-reg_receiver"/>
</dbReference>
<dbReference type="NCBIfam" id="TIGR00229">
    <property type="entry name" value="sensory_box"/>
    <property type="match status" value="1"/>
</dbReference>
<dbReference type="PANTHER" id="PTHR45339">
    <property type="entry name" value="HYBRID SIGNAL TRANSDUCTION HISTIDINE KINASE J"/>
    <property type="match status" value="1"/>
</dbReference>
<dbReference type="PANTHER" id="PTHR45339:SF1">
    <property type="entry name" value="HYBRID SIGNAL TRANSDUCTION HISTIDINE KINASE J"/>
    <property type="match status" value="1"/>
</dbReference>
<dbReference type="Pfam" id="PF02518">
    <property type="entry name" value="HATPase_c"/>
    <property type="match status" value="1"/>
</dbReference>
<dbReference type="Pfam" id="PF00512">
    <property type="entry name" value="HisKA"/>
    <property type="match status" value="1"/>
</dbReference>
<dbReference type="Pfam" id="PF00072">
    <property type="entry name" value="Response_reg"/>
    <property type="match status" value="1"/>
</dbReference>
<dbReference type="PRINTS" id="PR00344">
    <property type="entry name" value="BCTRLSENSOR"/>
</dbReference>
<dbReference type="SMART" id="SM00387">
    <property type="entry name" value="HATPase_c"/>
    <property type="match status" value="1"/>
</dbReference>
<dbReference type="SMART" id="SM00388">
    <property type="entry name" value="HisKA"/>
    <property type="match status" value="1"/>
</dbReference>
<dbReference type="SMART" id="SM00086">
    <property type="entry name" value="PAC"/>
    <property type="match status" value="1"/>
</dbReference>
<dbReference type="SMART" id="SM00448">
    <property type="entry name" value="REC"/>
    <property type="match status" value="1"/>
</dbReference>
<dbReference type="SUPFAM" id="SSF55874">
    <property type="entry name" value="ATPase domain of HSP90 chaperone/DNA topoisomerase II/histidine kinase"/>
    <property type="match status" value="1"/>
</dbReference>
<dbReference type="SUPFAM" id="SSF81995">
    <property type="entry name" value="beta-sandwich domain of Sec23/24"/>
    <property type="match status" value="1"/>
</dbReference>
<dbReference type="SUPFAM" id="SSF52172">
    <property type="entry name" value="CheY-like"/>
    <property type="match status" value="1"/>
</dbReference>
<dbReference type="SUPFAM" id="SSF47384">
    <property type="entry name" value="Homodimeric domain of signal transducing histidine kinase"/>
    <property type="match status" value="1"/>
</dbReference>
<dbReference type="SUPFAM" id="SSF55785">
    <property type="entry name" value="PYP-like sensor domain (PAS domain)"/>
    <property type="match status" value="1"/>
</dbReference>
<dbReference type="PROSITE" id="PS50109">
    <property type="entry name" value="HIS_KIN"/>
    <property type="match status" value="1"/>
</dbReference>
<dbReference type="PROSITE" id="PS50113">
    <property type="entry name" value="PAC"/>
    <property type="match status" value="1"/>
</dbReference>
<dbReference type="PROSITE" id="PS50110">
    <property type="entry name" value="RESPONSE_REGULATORY"/>
    <property type="match status" value="1"/>
</dbReference>
<organism>
    <name type="scientific">Dictyostelium discoideum</name>
    <name type="common">Social amoeba</name>
    <dbReference type="NCBI Taxonomy" id="44689"/>
    <lineage>
        <taxon>Eukaryota</taxon>
        <taxon>Amoebozoa</taxon>
        <taxon>Evosea</taxon>
        <taxon>Eumycetozoa</taxon>
        <taxon>Dictyostelia</taxon>
        <taxon>Dictyosteliales</taxon>
        <taxon>Dictyosteliaceae</taxon>
        <taxon>Dictyostelium</taxon>
    </lineage>
</organism>
<sequence>MILKFIIQQCVFKVAKIFSDNLIQIFMDISSVYSSSTLFFSKLSLLMCKVFNSKCAGISVLNKDGLFDTIAFCSSTQELENFSYSLKKISKNITYYDNINEIFNNSEIIKKYNLKSYMEIPLKDSKEFYFGDIVLFGDQTLNPNILDTNILTFITNRTSMEFEKKKVSDQLIIAKNLLDQSPSCSCLVSRNGKIIRKIGAFYERLLGLEIGENISSVEKSSDISTILKQVCFENNNLSTETTITKKNGEKYPAEVFVKEISDIHSNSIGIMIIVRDITDQIRLKEMNIELQKKSELEQKRNQELMEARDLALTATKIKSQFLATISHEIRTPLNGIITMGEMLLSTSPLNTEQHDIAETIFGSSELLLSITSDILDFSKIEASKLELEMIEFDFIGCLEGIGKTIGVSITNKPIEIAFLMDTDIPHRLIGDPNRLIQIMLNMGTNAVKYTDRGHIVFRISVISREQNRCKIKISIDDSGIGIGEDQRAHLFEPFHQIDSSSTRKYGGSGLGLAISSKLAKLMGGEVILERSKPGVGSLFSVTLNFEQIGSNTLKSLLPDKSFSRNKTCIILDNYEYTASIASQRFDQIFEESNIILVKESTVKKFFELVQEYKINGDVNKIDLKNLDPELLPFFDSSLICIIVFHRFMDNLDIFLKYVKDFIEFYKKKIVVALGINHKNFKNLPKRRDFLIFKKPISSTNLIKVSNMARKIIPKSSSSSNLIQTISQIDNQQQQQQQQLQQQEQEQQHQQQQLQQEQQFVTISPHSDSSEKKTTPKKDRGKYDFNISPLRIDRFGTESTSSPKIKLYSDTSSDSGESDEFEFSENLRELKSDGELVVLKNQPYKEQRLSNIQLINDPIVTPPTPKANSEVVSTKAESTFFQSSSITIKETRSDSVNSVNSVNSVNSVNSLNSENSNNSLDVGIRTRPRILLVDDNAVNRKVVKLQLKKLGYDCDTATNGFEGFEMQKKDNYELIFMDLNMPLCDGSMASKLIRSHEELNNYKSRANIVGLSATYLHGSKDYCVSMGMDDFVVKPLKLQPLGELVKKYLEVENNNNNNNNNNNNNNNNNSNNNNSNSNSNPNSNSNSNSNSNSNPNQNPNYCNNLPTDFI</sequence>
<comment type="function">
    <text evidence="1">Acts as a receptor histidine kinase for a signal transduction pathway. This protein undergoes an ATP-dependent autophosphorylation at a conserved histidine residue in the kinase core, and a phosphoryl group is then transferred to a conserved aspartate residue in the receiver domain (By similarity).</text>
</comment>
<comment type="catalytic activity">
    <reaction>
        <text>ATP + protein L-histidine = ADP + protein N-phospho-L-histidine.</text>
        <dbReference type="EC" id="2.7.13.3"/>
    </reaction>
</comment>
<feature type="chain" id="PRO_0000375998" description="Hybrid signal transduction histidine kinase F">
    <location>
        <begin position="1"/>
        <end position="1109"/>
    </location>
</feature>
<feature type="domain" description="PAC" evidence="4">
    <location>
        <begin position="237"/>
        <end position="289"/>
    </location>
</feature>
<feature type="domain" description="Histidine kinase" evidence="3">
    <location>
        <begin position="324"/>
        <end position="547"/>
    </location>
</feature>
<feature type="domain" description="Response regulatory" evidence="5">
    <location>
        <begin position="928"/>
        <end position="1048"/>
    </location>
</feature>
<feature type="region of interest" description="Disordered" evidence="6">
    <location>
        <begin position="739"/>
        <end position="819"/>
    </location>
</feature>
<feature type="region of interest" description="Disordered" evidence="6">
    <location>
        <begin position="1052"/>
        <end position="1109"/>
    </location>
</feature>
<feature type="coiled-coil region" evidence="2">
    <location>
        <begin position="719"/>
        <end position="760"/>
    </location>
</feature>
<feature type="compositionally biased region" description="Low complexity" evidence="6">
    <location>
        <begin position="739"/>
        <end position="758"/>
    </location>
</feature>
<feature type="compositionally biased region" description="Basic and acidic residues" evidence="6">
    <location>
        <begin position="767"/>
        <end position="782"/>
    </location>
</feature>
<feature type="compositionally biased region" description="Low complexity" evidence="6">
    <location>
        <begin position="1052"/>
        <end position="1099"/>
    </location>
</feature>
<feature type="compositionally biased region" description="Polar residues" evidence="6">
    <location>
        <begin position="1100"/>
        <end position="1109"/>
    </location>
</feature>
<feature type="modified residue" description="Phosphohistidine; by autocatalysis" evidence="3">
    <location>
        <position position="327"/>
    </location>
</feature>
<feature type="modified residue" description="4-aspartylphosphate" evidence="5">
    <location>
        <position position="977"/>
    </location>
</feature>
<feature type="sequence conflict" description="In Ref. 1; AAK54087." evidence="7" ref="1">
    <original>K</original>
    <variation>KVC</variation>
    <location>
        <position position="54"/>
    </location>
</feature>
<accession>Q551X9</accession>
<accession>Q86IA0</accession>
<accession>Q95PI0</accession>
<gene>
    <name type="primary">dhkF</name>
    <name type="ORF">DDB_G0276143</name>
</gene>
<proteinExistence type="inferred from homology"/>
<protein>
    <recommendedName>
        <fullName>Hybrid signal transduction histidine kinase F</fullName>
        <ecNumber>2.7.13.3</ecNumber>
    </recommendedName>
</protein>